<accession>Q7LZP9</accession>
<proteinExistence type="evidence at protein level"/>
<reference key="1">
    <citation type="submission" date="1997-04" db="PIR data bank">
        <authorList>
            <person name="Araki T."/>
            <person name="Matsumoto T."/>
            <person name="Kuramoto M."/>
            <person name="Torikata T."/>
        </authorList>
    </citation>
    <scope>PROTEIN SEQUENCE</scope>
</reference>
<evidence type="ECO:0000250" key="1"/>
<evidence type="ECO:0000255" key="2">
    <source>
        <dbReference type="PROSITE-ProRule" id="PRU00680"/>
    </source>
</evidence>
<dbReference type="EC" id="3.2.1.17"/>
<dbReference type="PIR" id="JC5369">
    <property type="entry name" value="JC5369"/>
</dbReference>
<dbReference type="BMRB" id="Q7LZP9"/>
<dbReference type="SMR" id="Q7LZP9"/>
<dbReference type="CAZy" id="GH22">
    <property type="family name" value="Glycoside Hydrolase Family 22"/>
</dbReference>
<dbReference type="GO" id="GO:0005576">
    <property type="term" value="C:extracellular region"/>
    <property type="evidence" value="ECO:0007669"/>
    <property type="project" value="UniProtKB-SubCell"/>
</dbReference>
<dbReference type="GO" id="GO:0003796">
    <property type="term" value="F:lysozyme activity"/>
    <property type="evidence" value="ECO:0007669"/>
    <property type="project" value="UniProtKB-EC"/>
</dbReference>
<dbReference type="GO" id="GO:0050829">
    <property type="term" value="P:defense response to Gram-negative bacterium"/>
    <property type="evidence" value="ECO:0007669"/>
    <property type="project" value="TreeGrafter"/>
</dbReference>
<dbReference type="GO" id="GO:0050830">
    <property type="term" value="P:defense response to Gram-positive bacterium"/>
    <property type="evidence" value="ECO:0007669"/>
    <property type="project" value="TreeGrafter"/>
</dbReference>
<dbReference type="GO" id="GO:0031640">
    <property type="term" value="P:killing of cells of another organism"/>
    <property type="evidence" value="ECO:0007669"/>
    <property type="project" value="UniProtKB-KW"/>
</dbReference>
<dbReference type="CDD" id="cd16897">
    <property type="entry name" value="LYZ_C"/>
    <property type="match status" value="1"/>
</dbReference>
<dbReference type="FunFam" id="1.10.530.10:FF:000001">
    <property type="entry name" value="Lysozyme C"/>
    <property type="match status" value="1"/>
</dbReference>
<dbReference type="Gene3D" id="1.10.530.10">
    <property type="match status" value="1"/>
</dbReference>
<dbReference type="InterPro" id="IPR001916">
    <property type="entry name" value="Glyco_hydro_22"/>
</dbReference>
<dbReference type="InterPro" id="IPR019799">
    <property type="entry name" value="Glyco_hydro_22_CS"/>
</dbReference>
<dbReference type="InterPro" id="IPR000974">
    <property type="entry name" value="Glyco_hydro_22_lys"/>
</dbReference>
<dbReference type="InterPro" id="IPR023346">
    <property type="entry name" value="Lysozyme-like_dom_sf"/>
</dbReference>
<dbReference type="PANTHER" id="PTHR11407">
    <property type="entry name" value="LYSOZYME C"/>
    <property type="match status" value="1"/>
</dbReference>
<dbReference type="PANTHER" id="PTHR11407:SF28">
    <property type="entry name" value="LYSOZYME C"/>
    <property type="match status" value="1"/>
</dbReference>
<dbReference type="Pfam" id="PF00062">
    <property type="entry name" value="Lys"/>
    <property type="match status" value="1"/>
</dbReference>
<dbReference type="PRINTS" id="PR00137">
    <property type="entry name" value="LYSOZYME"/>
</dbReference>
<dbReference type="PRINTS" id="PR00135">
    <property type="entry name" value="LYZLACT"/>
</dbReference>
<dbReference type="SMART" id="SM00263">
    <property type="entry name" value="LYZ1"/>
    <property type="match status" value="1"/>
</dbReference>
<dbReference type="SUPFAM" id="SSF53955">
    <property type="entry name" value="Lysozyme-like"/>
    <property type="match status" value="1"/>
</dbReference>
<dbReference type="PROSITE" id="PS00128">
    <property type="entry name" value="GLYCOSYL_HYDROL_F22_1"/>
    <property type="match status" value="1"/>
</dbReference>
<dbReference type="PROSITE" id="PS51348">
    <property type="entry name" value="GLYCOSYL_HYDROL_F22_2"/>
    <property type="match status" value="1"/>
</dbReference>
<gene>
    <name type="primary">LYZ</name>
</gene>
<protein>
    <recommendedName>
        <fullName>Lysozyme C</fullName>
        <ecNumber>3.2.1.17</ecNumber>
    </recommendedName>
    <alternativeName>
        <fullName>1,4-beta-N-acetylmuramidase C</fullName>
    </alternativeName>
</protein>
<sequence>KVYGRCELAAAMKRLGLDNYRGYSLGNWVCAAKFESNFNTHATNRNTDGSTDYGILQINSRWWCNDGRTPGSRNLCNIPCSALLSSDITASVNCAKKIVSDGNGMNAWVAWRNRCKGTDVHAWIRGCRL</sequence>
<feature type="chain" id="PRO_0000208866" description="Lysozyme C">
    <location>
        <begin position="1"/>
        <end position="129"/>
    </location>
</feature>
<feature type="domain" description="C-type lysozyme" evidence="2">
    <location>
        <begin position="1"/>
        <end position="129"/>
    </location>
</feature>
<feature type="active site" evidence="2">
    <location>
        <position position="35"/>
    </location>
</feature>
<feature type="active site" evidence="2">
    <location>
        <position position="52"/>
    </location>
</feature>
<feature type="disulfide bond" evidence="2">
    <location>
        <begin position="6"/>
        <end position="127"/>
    </location>
</feature>
<feature type="disulfide bond" evidence="2">
    <location>
        <begin position="30"/>
        <end position="115"/>
    </location>
</feature>
<feature type="disulfide bond" evidence="2">
    <location>
        <begin position="64"/>
        <end position="80"/>
    </location>
</feature>
<feature type="disulfide bond" evidence="2">
    <location>
        <begin position="76"/>
        <end position="94"/>
    </location>
</feature>
<name>LYSC_LOPIM</name>
<organism>
    <name type="scientific">Lophophorus impejanus</name>
    <name type="common">Himalayan monal pheasant</name>
    <name type="synonym">Phasianus impejanus</name>
    <dbReference type="NCBI Taxonomy" id="9040"/>
    <lineage>
        <taxon>Eukaryota</taxon>
        <taxon>Metazoa</taxon>
        <taxon>Chordata</taxon>
        <taxon>Craniata</taxon>
        <taxon>Vertebrata</taxon>
        <taxon>Euteleostomi</taxon>
        <taxon>Archelosauria</taxon>
        <taxon>Archosauria</taxon>
        <taxon>Dinosauria</taxon>
        <taxon>Saurischia</taxon>
        <taxon>Theropoda</taxon>
        <taxon>Coelurosauria</taxon>
        <taxon>Aves</taxon>
        <taxon>Neognathae</taxon>
        <taxon>Galloanserae</taxon>
        <taxon>Galliformes</taxon>
        <taxon>Phasianidae</taxon>
        <taxon>Phasianinae</taxon>
        <taxon>Lophophorus</taxon>
    </lineage>
</organism>
<keyword id="KW-0929">Antimicrobial</keyword>
<keyword id="KW-0081">Bacteriolytic enzyme</keyword>
<keyword id="KW-0903">Direct protein sequencing</keyword>
<keyword id="KW-1015">Disulfide bond</keyword>
<keyword id="KW-0326">Glycosidase</keyword>
<keyword id="KW-0378">Hydrolase</keyword>
<keyword id="KW-0964">Secreted</keyword>
<comment type="function">
    <text evidence="2">Lysozymes have primarily a bacteriolytic function; those in tissues and body fluids are associated with the monocyte-macrophage system and enhance the activity of immunoagents.</text>
</comment>
<comment type="catalytic activity">
    <reaction>
        <text>Hydrolysis of (1-&gt;4)-beta-linkages between N-acetylmuramic acid and N-acetyl-D-glucosamine residues in a peptidoglycan and between N-acetyl-D-glucosamine residues in chitodextrins.</text>
        <dbReference type="EC" id="3.2.1.17"/>
    </reaction>
</comment>
<comment type="subunit">
    <text evidence="1">Monomer.</text>
</comment>
<comment type="subcellular location">
    <subcellularLocation>
        <location>Secreted</location>
    </subcellularLocation>
</comment>
<comment type="miscellaneous">
    <text>Lysozyme C is capable of both hydrolysis and transglycosylation; it also shows a slight esterase activity. It acts rapidly on both peptide-substituted and unsubstituted peptidoglycan, and slowly on chitin oligosaccharides.</text>
</comment>
<comment type="similarity">
    <text evidence="2">Belongs to the glycosyl hydrolase 22 family.</text>
</comment>